<gene>
    <name evidence="1" type="primary">rpsG</name>
    <name type="ordered locus">E2348C_3590</name>
</gene>
<sequence length="156" mass="17604">MPRRRVIGQRKILPDPKFGSELLAKFVNILMVDGKKSTAESIVYSALETLAQRSGKSELEAFEVALENVRPTVEVKSRRVGGSTYQVPVEVRPVRRNALAMRWIVEAARKRGDKSMALRLANELSDAAENKGTAVKKREDVHRMAEANKAFAHYRW</sequence>
<comment type="function">
    <text evidence="1">One of the primary rRNA binding proteins, it binds directly to 16S rRNA where it nucleates assembly of the head domain of the 30S subunit. Is located at the subunit interface close to the decoding center, probably blocks exit of the E-site tRNA.</text>
</comment>
<comment type="subunit">
    <text evidence="1">Part of the 30S ribosomal subunit. Contacts proteins S9 and S11.</text>
</comment>
<comment type="similarity">
    <text evidence="1">Belongs to the universal ribosomal protein uS7 family.</text>
</comment>
<feature type="chain" id="PRO_1000135602" description="Small ribosomal subunit protein uS7">
    <location>
        <begin position="1"/>
        <end position="156"/>
    </location>
</feature>
<keyword id="KW-1185">Reference proteome</keyword>
<keyword id="KW-0687">Ribonucleoprotein</keyword>
<keyword id="KW-0689">Ribosomal protein</keyword>
<keyword id="KW-0694">RNA-binding</keyword>
<keyword id="KW-0699">rRNA-binding</keyword>
<keyword id="KW-0820">tRNA-binding</keyword>
<name>RS7_ECO27</name>
<proteinExistence type="inferred from homology"/>
<reference key="1">
    <citation type="journal article" date="2009" name="J. Bacteriol.">
        <title>Complete genome sequence and comparative genome analysis of enteropathogenic Escherichia coli O127:H6 strain E2348/69.</title>
        <authorList>
            <person name="Iguchi A."/>
            <person name="Thomson N.R."/>
            <person name="Ogura Y."/>
            <person name="Saunders D."/>
            <person name="Ooka T."/>
            <person name="Henderson I.R."/>
            <person name="Harris D."/>
            <person name="Asadulghani M."/>
            <person name="Kurokawa K."/>
            <person name="Dean P."/>
            <person name="Kenny B."/>
            <person name="Quail M.A."/>
            <person name="Thurston S."/>
            <person name="Dougan G."/>
            <person name="Hayashi T."/>
            <person name="Parkhill J."/>
            <person name="Frankel G."/>
        </authorList>
    </citation>
    <scope>NUCLEOTIDE SEQUENCE [LARGE SCALE GENOMIC DNA]</scope>
    <source>
        <strain>E2348/69 / EPEC</strain>
    </source>
</reference>
<protein>
    <recommendedName>
        <fullName evidence="1">Small ribosomal subunit protein uS7</fullName>
    </recommendedName>
    <alternativeName>
        <fullName evidence="2">30S ribosomal protein S7</fullName>
    </alternativeName>
</protein>
<evidence type="ECO:0000255" key="1">
    <source>
        <dbReference type="HAMAP-Rule" id="MF_00480"/>
    </source>
</evidence>
<evidence type="ECO:0000305" key="2"/>
<dbReference type="EMBL" id="FM180568">
    <property type="protein sequence ID" value="CAS11138.1"/>
    <property type="molecule type" value="Genomic_DNA"/>
</dbReference>
<dbReference type="RefSeq" id="WP_001138043.1">
    <property type="nucleotide sequence ID" value="NC_011601.1"/>
</dbReference>
<dbReference type="SMR" id="B7UK51"/>
<dbReference type="GeneID" id="93778657"/>
<dbReference type="KEGG" id="ecg:E2348C_3590"/>
<dbReference type="HOGENOM" id="CLU_072226_1_1_6"/>
<dbReference type="Proteomes" id="UP000008205">
    <property type="component" value="Chromosome"/>
</dbReference>
<dbReference type="GO" id="GO:0015935">
    <property type="term" value="C:small ribosomal subunit"/>
    <property type="evidence" value="ECO:0007669"/>
    <property type="project" value="InterPro"/>
</dbReference>
<dbReference type="GO" id="GO:0019843">
    <property type="term" value="F:rRNA binding"/>
    <property type="evidence" value="ECO:0007669"/>
    <property type="project" value="UniProtKB-UniRule"/>
</dbReference>
<dbReference type="GO" id="GO:0003735">
    <property type="term" value="F:structural constituent of ribosome"/>
    <property type="evidence" value="ECO:0007669"/>
    <property type="project" value="InterPro"/>
</dbReference>
<dbReference type="GO" id="GO:0000049">
    <property type="term" value="F:tRNA binding"/>
    <property type="evidence" value="ECO:0007669"/>
    <property type="project" value="UniProtKB-UniRule"/>
</dbReference>
<dbReference type="GO" id="GO:0006412">
    <property type="term" value="P:translation"/>
    <property type="evidence" value="ECO:0007669"/>
    <property type="project" value="UniProtKB-UniRule"/>
</dbReference>
<dbReference type="CDD" id="cd14869">
    <property type="entry name" value="uS7_Bacteria"/>
    <property type="match status" value="1"/>
</dbReference>
<dbReference type="FunFam" id="1.10.455.10:FF:000001">
    <property type="entry name" value="30S ribosomal protein S7"/>
    <property type="match status" value="1"/>
</dbReference>
<dbReference type="Gene3D" id="1.10.455.10">
    <property type="entry name" value="Ribosomal protein S7 domain"/>
    <property type="match status" value="1"/>
</dbReference>
<dbReference type="HAMAP" id="MF_00480_B">
    <property type="entry name" value="Ribosomal_uS7_B"/>
    <property type="match status" value="1"/>
</dbReference>
<dbReference type="InterPro" id="IPR000235">
    <property type="entry name" value="Ribosomal_uS7"/>
</dbReference>
<dbReference type="InterPro" id="IPR005717">
    <property type="entry name" value="Ribosomal_uS7_bac/org-type"/>
</dbReference>
<dbReference type="InterPro" id="IPR020606">
    <property type="entry name" value="Ribosomal_uS7_CS"/>
</dbReference>
<dbReference type="InterPro" id="IPR023798">
    <property type="entry name" value="Ribosomal_uS7_dom"/>
</dbReference>
<dbReference type="InterPro" id="IPR036823">
    <property type="entry name" value="Ribosomal_uS7_dom_sf"/>
</dbReference>
<dbReference type="NCBIfam" id="TIGR01029">
    <property type="entry name" value="rpsG_bact"/>
    <property type="match status" value="1"/>
</dbReference>
<dbReference type="PANTHER" id="PTHR11205">
    <property type="entry name" value="RIBOSOMAL PROTEIN S7"/>
    <property type="match status" value="1"/>
</dbReference>
<dbReference type="Pfam" id="PF00177">
    <property type="entry name" value="Ribosomal_S7"/>
    <property type="match status" value="1"/>
</dbReference>
<dbReference type="PIRSF" id="PIRSF002122">
    <property type="entry name" value="RPS7p_RPS7a_RPS5e_RPS7o"/>
    <property type="match status" value="1"/>
</dbReference>
<dbReference type="SUPFAM" id="SSF47973">
    <property type="entry name" value="Ribosomal protein S7"/>
    <property type="match status" value="1"/>
</dbReference>
<dbReference type="PROSITE" id="PS00052">
    <property type="entry name" value="RIBOSOMAL_S7"/>
    <property type="match status" value="1"/>
</dbReference>
<organism>
    <name type="scientific">Escherichia coli O127:H6 (strain E2348/69 / EPEC)</name>
    <dbReference type="NCBI Taxonomy" id="574521"/>
    <lineage>
        <taxon>Bacteria</taxon>
        <taxon>Pseudomonadati</taxon>
        <taxon>Pseudomonadota</taxon>
        <taxon>Gammaproteobacteria</taxon>
        <taxon>Enterobacterales</taxon>
        <taxon>Enterobacteriaceae</taxon>
        <taxon>Escherichia</taxon>
    </lineage>
</organism>
<accession>B7UK51</accession>